<keyword id="KW-0067">ATP-binding</keyword>
<keyword id="KW-0143">Chaperone</keyword>
<keyword id="KW-0963">Cytoplasm</keyword>
<keyword id="KW-0547">Nucleotide-binding</keyword>
<keyword id="KW-1185">Reference proteome</keyword>
<keyword id="KW-0346">Stress response</keyword>
<protein>
    <recommendedName>
        <fullName evidence="1">Chaperone protein HtpG</fullName>
    </recommendedName>
    <alternativeName>
        <fullName evidence="1">Heat shock protein HtpG</fullName>
    </alternativeName>
    <alternativeName>
        <fullName evidence="1">High temperature protein G</fullName>
    </alternativeName>
</protein>
<comment type="function">
    <text evidence="1">Molecular chaperone. Has ATPase activity.</text>
</comment>
<comment type="subunit">
    <text evidence="1">Homodimer.</text>
</comment>
<comment type="subcellular location">
    <subcellularLocation>
        <location evidence="1">Cytoplasm</location>
    </subcellularLocation>
</comment>
<comment type="similarity">
    <text evidence="1">Belongs to the heat shock protein 90 family.</text>
</comment>
<organism>
    <name type="scientific">Mycolicibacterium paratuberculosis (strain ATCC BAA-968 / K-10)</name>
    <name type="common">Mycobacterium paratuberculosis</name>
    <dbReference type="NCBI Taxonomy" id="262316"/>
    <lineage>
        <taxon>Bacteria</taxon>
        <taxon>Bacillati</taxon>
        <taxon>Actinomycetota</taxon>
        <taxon>Actinomycetes</taxon>
        <taxon>Mycobacteriales</taxon>
        <taxon>Mycobacteriaceae</taxon>
        <taxon>Mycobacterium</taxon>
        <taxon>Mycobacterium avium complex (MAC)</taxon>
    </lineage>
</organism>
<accession>P61186</accession>
<reference key="1">
    <citation type="journal article" date="2005" name="Proc. Natl. Acad. Sci. U.S.A.">
        <title>The complete genome sequence of Mycobacterium avium subspecies paratuberculosis.</title>
        <authorList>
            <person name="Li L."/>
            <person name="Bannantine J.P."/>
            <person name="Zhang Q."/>
            <person name="Amonsin A."/>
            <person name="May B.J."/>
            <person name="Alt D."/>
            <person name="Banerji N."/>
            <person name="Kanjilal S."/>
            <person name="Kapur V."/>
        </authorList>
    </citation>
    <scope>NUCLEOTIDE SEQUENCE [LARGE SCALE GENOMIC DNA]</scope>
    <source>
        <strain>ATCC BAA-968 / K-10</strain>
    </source>
</reference>
<name>HTPG_MYCPA</name>
<sequence>MNARVEQLEFQAEARQLLDLMVHSVYSNKDSFLRELISNASDALDKLRLEAFRNKDLDVDTSDLHIQIEVDKDARTLTIRDNGIGMTRAEVVDLIGTLAKSGTAELRQQLREAKNAQNEAASEELIGQFGIGFYSSFMVADKVELLTRKAGESEATKWESSGEGTYTIESVENAPQGTSVTLHLKPEDTEDELHDYTSEFKIKSLVKKYSDFIAWPIRMEVERRTPATEEGGEETVTREVETLNSMKALWARPKDEVSEEEYKEFYKHIAHAWDDPLEVIAMKAEGTFEYQALLFIPSHAPFDLFNRDAHTGIQLYVKRVFIMGDCDQLMPEYLRFVKGVVDAQDMSLNVSREILQQDRQIKAIRRRLTKKVLSTIKELQSERLDDYRTFWTQFGRVVKEGLLSDFDNQETLVQLCSFASTHSEEEATTLAQYVERMKEGQTQIFYATGETRQQILKSPHLEAFKAKGYEVLLLTDPVDEVWVGTVTEFDGKPLQSIAKGEVDLSAEGEESQAERDEQQKEFADLLAWLKDTLSDHVKEVRLSNRLTDSPACLITDAFGITPALARLYRASGQDIPVGKRILELNPKHPLVTGLRQAHQDRADDPSVAETAELLYGTALLAEGGALDDPARFAEILADRLARTL</sequence>
<evidence type="ECO:0000255" key="1">
    <source>
        <dbReference type="HAMAP-Rule" id="MF_00505"/>
    </source>
</evidence>
<dbReference type="EMBL" id="AE016958">
    <property type="protein sequence ID" value="AAS04386.1"/>
    <property type="molecule type" value="Genomic_DNA"/>
</dbReference>
<dbReference type="RefSeq" id="WP_010949465.1">
    <property type="nucleotide sequence ID" value="NZ_CP106873.1"/>
</dbReference>
<dbReference type="SMR" id="P61186"/>
<dbReference type="STRING" id="262316.MAP_2069c"/>
<dbReference type="KEGG" id="mpa:MAP_2069c"/>
<dbReference type="PATRIC" id="fig|262316.17.peg.2193"/>
<dbReference type="eggNOG" id="COG0326">
    <property type="taxonomic scope" value="Bacteria"/>
</dbReference>
<dbReference type="HOGENOM" id="CLU_006684_3_0_11"/>
<dbReference type="Proteomes" id="UP000000580">
    <property type="component" value="Chromosome"/>
</dbReference>
<dbReference type="GO" id="GO:0005737">
    <property type="term" value="C:cytoplasm"/>
    <property type="evidence" value="ECO:0007669"/>
    <property type="project" value="UniProtKB-SubCell"/>
</dbReference>
<dbReference type="GO" id="GO:0005524">
    <property type="term" value="F:ATP binding"/>
    <property type="evidence" value="ECO:0007669"/>
    <property type="project" value="UniProtKB-UniRule"/>
</dbReference>
<dbReference type="GO" id="GO:0016887">
    <property type="term" value="F:ATP hydrolysis activity"/>
    <property type="evidence" value="ECO:0007669"/>
    <property type="project" value="InterPro"/>
</dbReference>
<dbReference type="GO" id="GO:0140662">
    <property type="term" value="F:ATP-dependent protein folding chaperone"/>
    <property type="evidence" value="ECO:0007669"/>
    <property type="project" value="InterPro"/>
</dbReference>
<dbReference type="GO" id="GO:0051082">
    <property type="term" value="F:unfolded protein binding"/>
    <property type="evidence" value="ECO:0007669"/>
    <property type="project" value="UniProtKB-UniRule"/>
</dbReference>
<dbReference type="CDD" id="cd16927">
    <property type="entry name" value="HATPase_Hsp90-like"/>
    <property type="match status" value="1"/>
</dbReference>
<dbReference type="FunFam" id="1.20.120.790:FF:000006">
    <property type="entry name" value="Chaperone protein HtpG"/>
    <property type="match status" value="1"/>
</dbReference>
<dbReference type="FunFam" id="3.40.50.11260:FF:000005">
    <property type="entry name" value="Heat shock protein 90"/>
    <property type="match status" value="1"/>
</dbReference>
<dbReference type="FunFam" id="3.30.230.80:FF:000002">
    <property type="entry name" value="Molecular chaperone HtpG"/>
    <property type="match status" value="1"/>
</dbReference>
<dbReference type="FunFam" id="3.30.565.10:FF:000009">
    <property type="entry name" value="Molecular chaperone HtpG"/>
    <property type="match status" value="1"/>
</dbReference>
<dbReference type="Gene3D" id="3.30.230.80">
    <property type="match status" value="1"/>
</dbReference>
<dbReference type="Gene3D" id="3.40.50.11260">
    <property type="match status" value="1"/>
</dbReference>
<dbReference type="Gene3D" id="1.20.120.790">
    <property type="entry name" value="Heat shock protein 90, C-terminal domain"/>
    <property type="match status" value="1"/>
</dbReference>
<dbReference type="Gene3D" id="3.30.565.10">
    <property type="entry name" value="Histidine kinase-like ATPase, C-terminal domain"/>
    <property type="match status" value="1"/>
</dbReference>
<dbReference type="HAMAP" id="MF_00505">
    <property type="entry name" value="HSP90"/>
    <property type="match status" value="1"/>
</dbReference>
<dbReference type="InterPro" id="IPR036890">
    <property type="entry name" value="HATPase_C_sf"/>
</dbReference>
<dbReference type="InterPro" id="IPR037196">
    <property type="entry name" value="HSP90_C"/>
</dbReference>
<dbReference type="InterPro" id="IPR001404">
    <property type="entry name" value="Hsp90_fam"/>
</dbReference>
<dbReference type="InterPro" id="IPR020575">
    <property type="entry name" value="Hsp90_N"/>
</dbReference>
<dbReference type="InterPro" id="IPR020568">
    <property type="entry name" value="Ribosomal_Su5_D2-typ_SF"/>
</dbReference>
<dbReference type="NCBIfam" id="NF003555">
    <property type="entry name" value="PRK05218.1"/>
    <property type="match status" value="1"/>
</dbReference>
<dbReference type="PANTHER" id="PTHR11528">
    <property type="entry name" value="HEAT SHOCK PROTEIN 90 FAMILY MEMBER"/>
    <property type="match status" value="1"/>
</dbReference>
<dbReference type="Pfam" id="PF13589">
    <property type="entry name" value="HATPase_c_3"/>
    <property type="match status" value="1"/>
</dbReference>
<dbReference type="Pfam" id="PF00183">
    <property type="entry name" value="HSP90"/>
    <property type="match status" value="1"/>
</dbReference>
<dbReference type="PIRSF" id="PIRSF002583">
    <property type="entry name" value="Hsp90"/>
    <property type="match status" value="1"/>
</dbReference>
<dbReference type="PRINTS" id="PR00775">
    <property type="entry name" value="HEATSHOCK90"/>
</dbReference>
<dbReference type="SMART" id="SM00387">
    <property type="entry name" value="HATPase_c"/>
    <property type="match status" value="1"/>
</dbReference>
<dbReference type="SUPFAM" id="SSF55874">
    <property type="entry name" value="ATPase domain of HSP90 chaperone/DNA topoisomerase II/histidine kinase"/>
    <property type="match status" value="1"/>
</dbReference>
<dbReference type="SUPFAM" id="SSF110942">
    <property type="entry name" value="HSP90 C-terminal domain"/>
    <property type="match status" value="1"/>
</dbReference>
<dbReference type="SUPFAM" id="SSF54211">
    <property type="entry name" value="Ribosomal protein S5 domain 2-like"/>
    <property type="match status" value="1"/>
</dbReference>
<proteinExistence type="inferred from homology"/>
<feature type="chain" id="PRO_0000062995" description="Chaperone protein HtpG">
    <location>
        <begin position="1"/>
        <end position="644"/>
    </location>
</feature>
<feature type="region of interest" description="A; substrate-binding" evidence="1">
    <location>
        <begin position="1"/>
        <end position="352"/>
    </location>
</feature>
<feature type="region of interest" description="B" evidence="1">
    <location>
        <begin position="353"/>
        <end position="566"/>
    </location>
</feature>
<feature type="region of interest" description="C" evidence="1">
    <location>
        <begin position="567"/>
        <end position="644"/>
    </location>
</feature>
<gene>
    <name evidence="1" type="primary">htpG</name>
    <name type="ordered locus">MAP_2069c</name>
</gene>